<name>AES_ECOSM</name>
<feature type="chain" id="PRO_1000188988" description="Acetyl esterase">
    <location>
        <begin position="1"/>
        <end position="319"/>
    </location>
</feature>
<feature type="short sequence motif" description="Involved in the stabilization of the negatively charged intermediate by the formation of the oxyanion hole" evidence="1">
    <location>
        <begin position="91"/>
        <end position="93"/>
    </location>
</feature>
<feature type="active site" evidence="2">
    <location>
        <position position="165"/>
    </location>
</feature>
<feature type="active site" evidence="2">
    <location>
        <position position="262"/>
    </location>
</feature>
<feature type="active site" evidence="2">
    <location>
        <position position="292"/>
    </location>
</feature>
<accession>B1LJN4</accession>
<gene>
    <name evidence="2" type="primary">aes</name>
    <name type="ordered locus">EcSMS35_0519</name>
</gene>
<reference key="1">
    <citation type="journal article" date="2008" name="J. Bacteriol.">
        <title>Insights into the environmental resistance gene pool from the genome sequence of the multidrug-resistant environmental isolate Escherichia coli SMS-3-5.</title>
        <authorList>
            <person name="Fricke W.F."/>
            <person name="Wright M.S."/>
            <person name="Lindell A.H."/>
            <person name="Harkins D.M."/>
            <person name="Baker-Austin C."/>
            <person name="Ravel J."/>
            <person name="Stepanauskas R."/>
        </authorList>
    </citation>
    <scope>NUCLEOTIDE SEQUENCE [LARGE SCALE GENOMIC DNA]</scope>
    <source>
        <strain>SMS-3-5 / SECEC</strain>
    </source>
</reference>
<sequence>MKPENKLPVLDLISAEMKTVVNTLQPDLPPWPATGTIAEQRQYYTLERRFWNAGAPEMATRAYMVPTKYGQVETRLFCPQPDSPATLFYLHGGGFILGNLDTHDRIMRLLASYSQCTVIGIDYTLSPEARFPQAIEEIVAACCYFHQQAEDYQINMSRIGFAGDSAGAMLALASALWLRDKQIDCGKVAGVLLWYGLYGLRDSVTRRLLGGVWDGLTQQDLQMYEEAYLSNDADRESPYYCLFNNDLTREVPPCFIAGAEFDPLLDDSRLLYQTLAAHQQPCEFKLYPGTLHAFLHYSRMMKTADEALRDGAQFFTAQL</sequence>
<proteinExistence type="inferred from homology"/>
<protein>
    <recommendedName>
        <fullName evidence="2">Acetyl esterase</fullName>
        <ecNumber evidence="2">3.1.1.-</ecNumber>
    </recommendedName>
</protein>
<dbReference type="EC" id="3.1.1.-" evidence="2"/>
<dbReference type="EMBL" id="CP000970">
    <property type="protein sequence ID" value="ACB16199.1"/>
    <property type="molecule type" value="Genomic_DNA"/>
</dbReference>
<dbReference type="RefSeq" id="WP_000801813.1">
    <property type="nucleotide sequence ID" value="NC_010498.1"/>
</dbReference>
<dbReference type="SMR" id="B1LJN4"/>
<dbReference type="ESTHER" id="ecoli-Aes">
    <property type="family name" value="Acetyl_esterase"/>
</dbReference>
<dbReference type="MEROPS" id="S09.A47"/>
<dbReference type="KEGG" id="ecm:EcSMS35_0519"/>
<dbReference type="HOGENOM" id="CLU_012494_6_4_6"/>
<dbReference type="Proteomes" id="UP000007011">
    <property type="component" value="Chromosome"/>
</dbReference>
<dbReference type="GO" id="GO:0005737">
    <property type="term" value="C:cytoplasm"/>
    <property type="evidence" value="ECO:0007669"/>
    <property type="project" value="UniProtKB-SubCell"/>
</dbReference>
<dbReference type="GO" id="GO:0052689">
    <property type="term" value="F:carboxylic ester hydrolase activity"/>
    <property type="evidence" value="ECO:0007669"/>
    <property type="project" value="UniProtKB-UniRule"/>
</dbReference>
<dbReference type="FunFam" id="3.40.50.1820:FF:000035">
    <property type="entry name" value="Acetyl esterase"/>
    <property type="match status" value="1"/>
</dbReference>
<dbReference type="Gene3D" id="3.40.50.1820">
    <property type="entry name" value="alpha/beta hydrolase"/>
    <property type="match status" value="1"/>
</dbReference>
<dbReference type="HAMAP" id="MF_01958">
    <property type="entry name" value="Acetyl_esterase"/>
    <property type="match status" value="1"/>
</dbReference>
<dbReference type="InterPro" id="IPR013094">
    <property type="entry name" value="AB_hydrolase_3"/>
</dbReference>
<dbReference type="InterPro" id="IPR029058">
    <property type="entry name" value="AB_hydrolase_fold"/>
</dbReference>
<dbReference type="InterPro" id="IPR023508">
    <property type="entry name" value="Acetyl_esterase"/>
</dbReference>
<dbReference type="InterPro" id="IPR050300">
    <property type="entry name" value="GDXG_lipolytic_enzyme"/>
</dbReference>
<dbReference type="InterPro" id="IPR002168">
    <property type="entry name" value="Lipase_GDXG_HIS_AS"/>
</dbReference>
<dbReference type="InterPro" id="IPR033140">
    <property type="entry name" value="Lipase_GDXG_put_SER_AS"/>
</dbReference>
<dbReference type="NCBIfam" id="NF007547">
    <property type="entry name" value="PRK10162.1"/>
    <property type="match status" value="1"/>
</dbReference>
<dbReference type="PANTHER" id="PTHR48081">
    <property type="entry name" value="AB HYDROLASE SUPERFAMILY PROTEIN C4A8.06C"/>
    <property type="match status" value="1"/>
</dbReference>
<dbReference type="PANTHER" id="PTHR48081:SF8">
    <property type="entry name" value="ALPHA_BETA HYDROLASE FOLD-3 DOMAIN-CONTAINING PROTEIN-RELATED"/>
    <property type="match status" value="1"/>
</dbReference>
<dbReference type="Pfam" id="PF07859">
    <property type="entry name" value="Abhydrolase_3"/>
    <property type="match status" value="1"/>
</dbReference>
<dbReference type="SUPFAM" id="SSF53474">
    <property type="entry name" value="alpha/beta-Hydrolases"/>
    <property type="match status" value="1"/>
</dbReference>
<dbReference type="PROSITE" id="PS01173">
    <property type="entry name" value="LIPASE_GDXG_HIS"/>
    <property type="match status" value="1"/>
</dbReference>
<dbReference type="PROSITE" id="PS01174">
    <property type="entry name" value="LIPASE_GDXG_SER"/>
    <property type="match status" value="1"/>
</dbReference>
<comment type="function">
    <text evidence="2">Displays esterase activity towards short chain fatty esters (acyl chain length of up to 8 carbons). Able to hydrolyze triacetylglycerol (triacetin) and tributyrylglycerol (tributyrin), but not trioleylglycerol (triolein) or cholesterol oleate. Negatively regulates MalT activity by antagonizing maltotriose binding. Inhibits MelA galactosidase activity.</text>
</comment>
<comment type="subunit">
    <text evidence="2">Homodimer. Interacts with MalT and MelA.</text>
</comment>
<comment type="subcellular location">
    <subcellularLocation>
        <location evidence="2">Cytoplasm</location>
    </subcellularLocation>
</comment>
<comment type="similarity">
    <text evidence="2">Belongs to the 'GDXG' lipolytic enzyme family.</text>
</comment>
<evidence type="ECO:0000250" key="1">
    <source>
        <dbReference type="UniProtKB" id="Q5NUF3"/>
    </source>
</evidence>
<evidence type="ECO:0000255" key="2">
    <source>
        <dbReference type="HAMAP-Rule" id="MF_01958"/>
    </source>
</evidence>
<keyword id="KW-0963">Cytoplasm</keyword>
<keyword id="KW-0378">Hydrolase</keyword>
<keyword id="KW-0719">Serine esterase</keyword>
<organism>
    <name type="scientific">Escherichia coli (strain SMS-3-5 / SECEC)</name>
    <dbReference type="NCBI Taxonomy" id="439855"/>
    <lineage>
        <taxon>Bacteria</taxon>
        <taxon>Pseudomonadati</taxon>
        <taxon>Pseudomonadota</taxon>
        <taxon>Gammaproteobacteria</taxon>
        <taxon>Enterobacterales</taxon>
        <taxon>Enterobacteriaceae</taxon>
        <taxon>Escherichia</taxon>
    </lineage>
</organism>